<feature type="chain" id="PRO_0000355445" description="Cytochrome b6-f complex subunit 8">
    <location>
        <begin position="1"/>
        <end position="29"/>
    </location>
</feature>
<feature type="transmembrane region" description="Helical" evidence="1">
    <location>
        <begin position="3"/>
        <end position="23"/>
    </location>
</feature>
<name>PETN_LEMMI</name>
<evidence type="ECO:0000255" key="1">
    <source>
        <dbReference type="HAMAP-Rule" id="MF_00395"/>
    </source>
</evidence>
<reference key="1">
    <citation type="journal article" date="2008" name="J. Mol. Evol.">
        <title>Complete sequence of the Duckweed (Lemna minor) chloroplast genome: structural organization and phylogenetic relationships to other angiosperms.</title>
        <authorList>
            <person name="Mardanov A.V."/>
            <person name="Ravin N.V."/>
            <person name="Kuznetsov B.B."/>
            <person name="Samigullin T.H."/>
            <person name="Antonov A.S."/>
            <person name="Kolganova T.V."/>
            <person name="Skyabin K.G."/>
        </authorList>
    </citation>
    <scope>NUCLEOTIDE SEQUENCE [LARGE SCALE GENOMIC DNA]</scope>
</reference>
<gene>
    <name evidence="1" type="primary">petN</name>
</gene>
<accession>A9L989</accession>
<geneLocation type="chloroplast"/>
<organism>
    <name type="scientific">Lemna minor</name>
    <name type="common">Common duckweed</name>
    <dbReference type="NCBI Taxonomy" id="4472"/>
    <lineage>
        <taxon>Eukaryota</taxon>
        <taxon>Viridiplantae</taxon>
        <taxon>Streptophyta</taxon>
        <taxon>Embryophyta</taxon>
        <taxon>Tracheophyta</taxon>
        <taxon>Spermatophyta</taxon>
        <taxon>Magnoliopsida</taxon>
        <taxon>Liliopsida</taxon>
        <taxon>Araceae</taxon>
        <taxon>Lemnoideae</taxon>
        <taxon>Lemna</taxon>
    </lineage>
</organism>
<dbReference type="EMBL" id="DQ400350">
    <property type="protein sequence ID" value="ABD48488.1"/>
    <property type="molecule type" value="Genomic_DNA"/>
</dbReference>
<dbReference type="RefSeq" id="YP_001595501.1">
    <property type="nucleotide sequence ID" value="NC_010109.1"/>
</dbReference>
<dbReference type="SMR" id="A9L989"/>
<dbReference type="GeneID" id="5787516"/>
<dbReference type="GO" id="GO:0009535">
    <property type="term" value="C:chloroplast thylakoid membrane"/>
    <property type="evidence" value="ECO:0007669"/>
    <property type="project" value="UniProtKB-SubCell"/>
</dbReference>
<dbReference type="GO" id="GO:0009512">
    <property type="term" value="C:cytochrome b6f complex"/>
    <property type="evidence" value="ECO:0007669"/>
    <property type="project" value="InterPro"/>
</dbReference>
<dbReference type="GO" id="GO:0045158">
    <property type="term" value="F:electron transporter, transferring electrons within cytochrome b6/f complex of photosystem II activity"/>
    <property type="evidence" value="ECO:0007669"/>
    <property type="project" value="InterPro"/>
</dbReference>
<dbReference type="GO" id="GO:0017004">
    <property type="term" value="P:cytochrome complex assembly"/>
    <property type="evidence" value="ECO:0007669"/>
    <property type="project" value="UniProtKB-UniRule"/>
</dbReference>
<dbReference type="GO" id="GO:0015979">
    <property type="term" value="P:photosynthesis"/>
    <property type="evidence" value="ECO:0007669"/>
    <property type="project" value="UniProtKB-KW"/>
</dbReference>
<dbReference type="HAMAP" id="MF_00395">
    <property type="entry name" value="Cytb6_f_PetN"/>
    <property type="match status" value="1"/>
</dbReference>
<dbReference type="InterPro" id="IPR036143">
    <property type="entry name" value="Cytochr_b6-f_cplx_su8_sf"/>
</dbReference>
<dbReference type="InterPro" id="IPR005497">
    <property type="entry name" value="Cytochrome_b6-f_cplx_su8"/>
</dbReference>
<dbReference type="Pfam" id="PF03742">
    <property type="entry name" value="PetN"/>
    <property type="match status" value="1"/>
</dbReference>
<dbReference type="SUPFAM" id="SSF103451">
    <property type="entry name" value="PetN subunit of the cytochrome b6f complex"/>
    <property type="match status" value="1"/>
</dbReference>
<protein>
    <recommendedName>
        <fullName evidence="1">Cytochrome b6-f complex subunit 8</fullName>
    </recommendedName>
    <alternativeName>
        <fullName evidence="1">Cytochrome b6-f complex subunit PetN</fullName>
    </alternativeName>
    <alternativeName>
        <fullName evidence="1">Cytochrome b6-f complex subunit VIII</fullName>
    </alternativeName>
</protein>
<comment type="function">
    <text evidence="1">Component of the cytochrome b6-f complex, which mediates electron transfer between photosystem II (PSII) and photosystem I (PSI), cyclic electron flow around PSI, and state transitions.</text>
</comment>
<comment type="subunit">
    <text evidence="1">The 4 large subunits of the cytochrome b6-f complex are cytochrome b6, subunit IV (17 kDa polypeptide, PetD), cytochrome f and the Rieske protein, while the 4 small subunits are PetG, PetL, PetM and PetN. The complex functions as a dimer.</text>
</comment>
<comment type="subcellular location">
    <subcellularLocation>
        <location evidence="1">Plastid</location>
        <location evidence="1">Chloroplast thylakoid membrane</location>
        <topology evidence="1">Single-pass membrane protein</topology>
    </subcellularLocation>
</comment>
<comment type="similarity">
    <text evidence="1">Belongs to the PetN family.</text>
</comment>
<proteinExistence type="inferred from homology"/>
<sequence length="29" mass="3170">MDIVSLAWAALMVVFTFSLSLVVWGRSGL</sequence>
<keyword id="KW-0150">Chloroplast</keyword>
<keyword id="KW-0249">Electron transport</keyword>
<keyword id="KW-0472">Membrane</keyword>
<keyword id="KW-0602">Photosynthesis</keyword>
<keyword id="KW-0934">Plastid</keyword>
<keyword id="KW-0793">Thylakoid</keyword>
<keyword id="KW-0812">Transmembrane</keyword>
<keyword id="KW-1133">Transmembrane helix</keyword>
<keyword id="KW-0813">Transport</keyword>